<evidence type="ECO:0000255" key="1">
    <source>
        <dbReference type="HAMAP-Rule" id="MF_01584"/>
    </source>
</evidence>
<reference key="1">
    <citation type="journal article" date="2005" name="Nucleic Acids Res.">
        <title>Genomic blueprint of Hahella chejuensis, a marine microbe producing an algicidal agent.</title>
        <authorList>
            <person name="Jeong H."/>
            <person name="Yim J.H."/>
            <person name="Lee C."/>
            <person name="Choi S.-H."/>
            <person name="Park Y.K."/>
            <person name="Yoon S.H."/>
            <person name="Hur C.-G."/>
            <person name="Kang H.-Y."/>
            <person name="Kim D."/>
            <person name="Lee H.H."/>
            <person name="Park K.H."/>
            <person name="Park S.-H."/>
            <person name="Park H.-S."/>
            <person name="Lee H.K."/>
            <person name="Oh T.K."/>
            <person name="Kim J.F."/>
        </authorList>
    </citation>
    <scope>NUCLEOTIDE SEQUENCE [LARGE SCALE GENOMIC DNA]</scope>
    <source>
        <strain>KCTC 2396</strain>
    </source>
</reference>
<organism>
    <name type="scientific">Hahella chejuensis (strain KCTC 2396)</name>
    <dbReference type="NCBI Taxonomy" id="349521"/>
    <lineage>
        <taxon>Bacteria</taxon>
        <taxon>Pseudomonadati</taxon>
        <taxon>Pseudomonadota</taxon>
        <taxon>Gammaproteobacteria</taxon>
        <taxon>Oceanospirillales</taxon>
        <taxon>Hahellaceae</taxon>
        <taxon>Hahella</taxon>
    </lineage>
</organism>
<proteinExistence type="inferred from homology"/>
<keyword id="KW-1185">Reference proteome</keyword>
<gene>
    <name type="ordered locus">HCH_06091</name>
</gene>
<name>Y6091_HAHCH</name>
<comment type="similarity">
    <text evidence="1">Belongs to the UPF0502 family.</text>
</comment>
<accession>Q2S9D5</accession>
<protein>
    <recommendedName>
        <fullName evidence="1">UPF0502 protein HCH_06091</fullName>
    </recommendedName>
</protein>
<feature type="chain" id="PRO_0000309392" description="UPF0502 protein HCH_06091">
    <location>
        <begin position="1"/>
        <end position="219"/>
    </location>
</feature>
<dbReference type="EMBL" id="CP000155">
    <property type="protein sequence ID" value="ABC32739.1"/>
    <property type="molecule type" value="Genomic_DNA"/>
</dbReference>
<dbReference type="RefSeq" id="WP_011399797.1">
    <property type="nucleotide sequence ID" value="NC_007645.1"/>
</dbReference>
<dbReference type="SMR" id="Q2S9D5"/>
<dbReference type="STRING" id="349521.HCH_06091"/>
<dbReference type="KEGG" id="hch:HCH_06091"/>
<dbReference type="eggNOG" id="COG3132">
    <property type="taxonomic scope" value="Bacteria"/>
</dbReference>
<dbReference type="HOGENOM" id="CLU_057831_2_0_6"/>
<dbReference type="OrthoDB" id="9784785at2"/>
<dbReference type="Proteomes" id="UP000000238">
    <property type="component" value="Chromosome"/>
</dbReference>
<dbReference type="Gene3D" id="1.10.10.10">
    <property type="entry name" value="Winged helix-like DNA-binding domain superfamily/Winged helix DNA-binding domain"/>
    <property type="match status" value="2"/>
</dbReference>
<dbReference type="HAMAP" id="MF_01584">
    <property type="entry name" value="UPF0502"/>
    <property type="match status" value="1"/>
</dbReference>
<dbReference type="InterPro" id="IPR007432">
    <property type="entry name" value="DUF480"/>
</dbReference>
<dbReference type="InterPro" id="IPR036388">
    <property type="entry name" value="WH-like_DNA-bd_sf"/>
</dbReference>
<dbReference type="InterPro" id="IPR036390">
    <property type="entry name" value="WH_DNA-bd_sf"/>
</dbReference>
<dbReference type="PANTHER" id="PTHR38768">
    <property type="entry name" value="UPF0502 PROTEIN YCEH"/>
    <property type="match status" value="1"/>
</dbReference>
<dbReference type="PANTHER" id="PTHR38768:SF1">
    <property type="entry name" value="UPF0502 PROTEIN YCEH"/>
    <property type="match status" value="1"/>
</dbReference>
<dbReference type="Pfam" id="PF04337">
    <property type="entry name" value="DUF480"/>
    <property type="match status" value="1"/>
</dbReference>
<dbReference type="SUPFAM" id="SSF46785">
    <property type="entry name" value="Winged helix' DNA-binding domain"/>
    <property type="match status" value="2"/>
</dbReference>
<sequence>MKKDLTLYETRVVGVLLEKEITTPDQYPLSLNALVNACNQKSNRHPVLELDEATVRQTLEALQRKDLVKGSSYGSRVEKYHHRFCNTEFGELKLDAQQVAVVCELLLRGPQTPGELRSRASRMAEFSDVQATESTLKRLLEHKLGPLVVMLPREPGKRESRYMHMFSSDIEPVETAAPSDSGSISAYKAKITDLEVRLEALQEENDALKKKLRQLGQVV</sequence>